<reference key="1">
    <citation type="journal article" date="2004" name="Nucleic Acids Res.">
        <title>The genome sequence of Bacillus cereus ATCC 10987 reveals metabolic adaptations and a large plasmid related to Bacillus anthracis pXO1.</title>
        <authorList>
            <person name="Rasko D.A."/>
            <person name="Ravel J."/>
            <person name="Oekstad O.A."/>
            <person name="Helgason E."/>
            <person name="Cer R.Z."/>
            <person name="Jiang L."/>
            <person name="Shores K.A."/>
            <person name="Fouts D.E."/>
            <person name="Tourasse N.J."/>
            <person name="Angiuoli S.V."/>
            <person name="Kolonay J.F."/>
            <person name="Nelson W.C."/>
            <person name="Kolstoe A.-B."/>
            <person name="Fraser C.M."/>
            <person name="Read T.D."/>
        </authorList>
    </citation>
    <scope>NUCLEOTIDE SEQUENCE [LARGE SCALE GENOMIC DNA]</scope>
    <source>
        <strain>ATCC 10987 / NRS 248</strain>
    </source>
</reference>
<evidence type="ECO:0000255" key="1">
    <source>
        <dbReference type="HAMAP-Rule" id="MF_00066"/>
    </source>
</evidence>
<comment type="catalytic activity">
    <reaction evidence="1">
        <text>sulfate + ATP + H(+) = adenosine 5'-phosphosulfate + diphosphate</text>
        <dbReference type="Rhea" id="RHEA:18133"/>
        <dbReference type="ChEBI" id="CHEBI:15378"/>
        <dbReference type="ChEBI" id="CHEBI:16189"/>
        <dbReference type="ChEBI" id="CHEBI:30616"/>
        <dbReference type="ChEBI" id="CHEBI:33019"/>
        <dbReference type="ChEBI" id="CHEBI:58243"/>
        <dbReference type="EC" id="2.7.7.4"/>
    </reaction>
</comment>
<comment type="pathway">
    <text evidence="1">Sulfur metabolism; hydrogen sulfide biosynthesis; sulfite from sulfate: step 1/3.</text>
</comment>
<comment type="similarity">
    <text evidence="1">Belongs to the sulfate adenylyltransferase family.</text>
</comment>
<gene>
    <name evidence="1" type="primary">sat</name>
    <name type="ordered locus">BCE_1545</name>
</gene>
<organism>
    <name type="scientific">Bacillus cereus (strain ATCC 10987 / NRS 248)</name>
    <dbReference type="NCBI Taxonomy" id="222523"/>
    <lineage>
        <taxon>Bacteria</taxon>
        <taxon>Bacillati</taxon>
        <taxon>Bacillota</taxon>
        <taxon>Bacilli</taxon>
        <taxon>Bacillales</taxon>
        <taxon>Bacillaceae</taxon>
        <taxon>Bacillus</taxon>
        <taxon>Bacillus cereus group</taxon>
    </lineage>
</organism>
<protein>
    <recommendedName>
        <fullName evidence="1">Sulfate adenylyltransferase</fullName>
        <ecNumber evidence="1">2.7.7.4</ecNumber>
    </recommendedName>
    <alternativeName>
        <fullName evidence="1">ATP-sulfurylase</fullName>
    </alternativeName>
    <alternativeName>
        <fullName evidence="1">Sulfate adenylate transferase</fullName>
        <shortName evidence="1">SAT</shortName>
    </alternativeName>
</protein>
<feature type="chain" id="PRO_0000340609" description="Sulfate adenylyltransferase">
    <location>
        <begin position="1"/>
        <end position="378"/>
    </location>
</feature>
<name>SAT_BACC1</name>
<keyword id="KW-0067">ATP-binding</keyword>
<keyword id="KW-0547">Nucleotide-binding</keyword>
<keyword id="KW-0548">Nucleotidyltransferase</keyword>
<keyword id="KW-0808">Transferase</keyword>
<accession>Q73B75</accession>
<proteinExistence type="inferred from homology"/>
<dbReference type="EC" id="2.7.7.4" evidence="1"/>
<dbReference type="EMBL" id="AE017194">
    <property type="protein sequence ID" value="AAS40474.1"/>
    <property type="molecule type" value="Genomic_DNA"/>
</dbReference>
<dbReference type="SMR" id="Q73B75"/>
<dbReference type="KEGG" id="bca:BCE_1545"/>
<dbReference type="HOGENOM" id="CLU_022950_1_1_9"/>
<dbReference type="UniPathway" id="UPA00140">
    <property type="reaction ID" value="UER00204"/>
</dbReference>
<dbReference type="Proteomes" id="UP000002527">
    <property type="component" value="Chromosome"/>
</dbReference>
<dbReference type="GO" id="GO:0005524">
    <property type="term" value="F:ATP binding"/>
    <property type="evidence" value="ECO:0007669"/>
    <property type="project" value="UniProtKB-KW"/>
</dbReference>
<dbReference type="GO" id="GO:0004781">
    <property type="term" value="F:sulfate adenylyltransferase (ATP) activity"/>
    <property type="evidence" value="ECO:0007669"/>
    <property type="project" value="UniProtKB-UniRule"/>
</dbReference>
<dbReference type="GO" id="GO:0070814">
    <property type="term" value="P:hydrogen sulfide biosynthetic process"/>
    <property type="evidence" value="ECO:0007669"/>
    <property type="project" value="UniProtKB-UniRule"/>
</dbReference>
<dbReference type="GO" id="GO:0000103">
    <property type="term" value="P:sulfate assimilation"/>
    <property type="evidence" value="ECO:0007669"/>
    <property type="project" value="UniProtKB-UniRule"/>
</dbReference>
<dbReference type="CDD" id="cd00517">
    <property type="entry name" value="ATPS"/>
    <property type="match status" value="1"/>
</dbReference>
<dbReference type="Gene3D" id="3.40.50.620">
    <property type="entry name" value="HUPs"/>
    <property type="match status" value="1"/>
</dbReference>
<dbReference type="Gene3D" id="3.10.400.10">
    <property type="entry name" value="Sulfate adenylyltransferase"/>
    <property type="match status" value="1"/>
</dbReference>
<dbReference type="HAMAP" id="MF_00066">
    <property type="entry name" value="Sulf_adenylyltr"/>
    <property type="match status" value="1"/>
</dbReference>
<dbReference type="InterPro" id="IPR025980">
    <property type="entry name" value="ATP-Sase_PUA-like_dom"/>
</dbReference>
<dbReference type="InterPro" id="IPR015947">
    <property type="entry name" value="PUA-like_sf"/>
</dbReference>
<dbReference type="InterPro" id="IPR014729">
    <property type="entry name" value="Rossmann-like_a/b/a_fold"/>
</dbReference>
<dbReference type="InterPro" id="IPR020792">
    <property type="entry name" value="SO4_adenylyltransferase_pro"/>
</dbReference>
<dbReference type="InterPro" id="IPR024951">
    <property type="entry name" value="Sulfurylase_cat_dom"/>
</dbReference>
<dbReference type="InterPro" id="IPR002650">
    <property type="entry name" value="Sulphate_adenylyltransferase"/>
</dbReference>
<dbReference type="NCBIfam" id="NF003166">
    <property type="entry name" value="PRK04149.1"/>
    <property type="match status" value="1"/>
</dbReference>
<dbReference type="NCBIfam" id="TIGR00339">
    <property type="entry name" value="sopT"/>
    <property type="match status" value="1"/>
</dbReference>
<dbReference type="PANTHER" id="PTHR43509">
    <property type="match status" value="1"/>
</dbReference>
<dbReference type="PANTHER" id="PTHR43509:SF1">
    <property type="entry name" value="SULFATE ADENYLYLTRANSFERASE"/>
    <property type="match status" value="1"/>
</dbReference>
<dbReference type="Pfam" id="PF01747">
    <property type="entry name" value="ATP-sulfurylase"/>
    <property type="match status" value="1"/>
</dbReference>
<dbReference type="Pfam" id="PF14306">
    <property type="entry name" value="PUA_2"/>
    <property type="match status" value="1"/>
</dbReference>
<dbReference type="SUPFAM" id="SSF52374">
    <property type="entry name" value="Nucleotidylyl transferase"/>
    <property type="match status" value="1"/>
</dbReference>
<dbReference type="SUPFAM" id="SSF88697">
    <property type="entry name" value="PUA domain-like"/>
    <property type="match status" value="1"/>
</dbReference>
<sequence length="378" mass="42592">MSTVNELVNRVDETYDVSQIEKEIGLDNIALSDLELLATGGYSPLTGFLGKKDYDSVVETLRLNNGSVWSIPITLPVTEEVAETLKVGEEVKLVNGGNVYGVIQIEDIFVPDKEKEALLVYKTTDEAHPGVKKLYERPSVYVGGAIVLTKRFENNPFPSYHLDPIETREEFKKRGWKTVVGFQTRNPVHRAHEYIQKSALEIVDGLFLNPLVGETKSDDIPADVRMESYEVLLQNYYPKDRVFLSVFPAAMRYAGPREAIFHALVRKNFGCTHFIVGRDHAGVGDYYGTYEAQEIFTNFTVEELGITPLFFEHSFYCTKCEAMASTKTCPHGKEDHVILSGTKVRELLRNGEVPPSTFSRREVVEVLIKGLKKEVVTE</sequence>